<feature type="signal peptide">
    <location>
        <begin position="1"/>
        <end position="44"/>
    </location>
</feature>
<feature type="chain" id="PRO_0000023844" description="Cytochrome f">
    <location>
        <begin position="45"/>
        <end position="333"/>
    </location>
</feature>
<feature type="transmembrane region" description="Helical" evidence="2">
    <location>
        <begin position="301"/>
        <end position="318"/>
    </location>
</feature>
<feature type="binding site" description="axial binding residue" evidence="1">
    <location>
        <position position="45"/>
    </location>
    <ligand>
        <name>heme</name>
        <dbReference type="ChEBI" id="CHEBI:30413"/>
    </ligand>
    <ligandPart>
        <name>Fe</name>
        <dbReference type="ChEBI" id="CHEBI:18248"/>
    </ligandPart>
</feature>
<feature type="binding site" description="covalent" evidence="1">
    <location>
        <position position="66"/>
    </location>
    <ligand>
        <name>heme</name>
        <dbReference type="ChEBI" id="CHEBI:30413"/>
    </ligand>
</feature>
<feature type="binding site" description="covalent" evidence="1">
    <location>
        <position position="69"/>
    </location>
    <ligand>
        <name>heme</name>
        <dbReference type="ChEBI" id="CHEBI:30413"/>
    </ligand>
</feature>
<feature type="binding site" description="axial binding residue" evidence="1">
    <location>
        <position position="70"/>
    </location>
    <ligand>
        <name>heme</name>
        <dbReference type="ChEBI" id="CHEBI:30413"/>
    </ligand>
    <ligandPart>
        <name>Fe</name>
        <dbReference type="ChEBI" id="CHEBI:18248"/>
    </ligandPart>
</feature>
<comment type="function">
    <text evidence="1">Component of the cytochrome b6-f complex, which mediates electron transfer between photosystem II (PSII) and photosystem I (PSI), cyclic electron flow around PSI, and state transitions.</text>
</comment>
<comment type="cofactor">
    <cofactor evidence="1">
        <name>heme</name>
        <dbReference type="ChEBI" id="CHEBI:30413"/>
    </cofactor>
    <text evidence="1">Binds 1 heme group covalently.</text>
</comment>
<comment type="subunit">
    <text evidence="1">The 4 large subunits of the cytochrome b6-f complex are cytochrome b6, subunit IV (17 kDa polypeptide, PetD), cytochrome f and the Rieske protein, while the 4 small subunits are PetG, PetL, PetM and PetN. The complex functions as a dimer (By similarity).</text>
</comment>
<comment type="subcellular location">
    <subcellularLocation>
        <location evidence="1">Cellular thylakoid membrane</location>
        <topology evidence="1">Single-pass membrane protein</topology>
    </subcellularLocation>
</comment>
<comment type="similarity">
    <text evidence="3">Belongs to the cytochrome f family.</text>
</comment>
<evidence type="ECO:0000250" key="1"/>
<evidence type="ECO:0000255" key="2"/>
<evidence type="ECO:0000305" key="3"/>
<dbReference type="EMBL" id="J03855">
    <property type="protein sequence ID" value="AAA23333.1"/>
    <property type="molecule type" value="Genomic_DNA"/>
</dbReference>
<dbReference type="SMR" id="P13626"/>
<dbReference type="GO" id="GO:0031676">
    <property type="term" value="C:plasma membrane-derived thylakoid membrane"/>
    <property type="evidence" value="ECO:0007669"/>
    <property type="project" value="UniProtKB-SubCell"/>
</dbReference>
<dbReference type="GO" id="GO:0009055">
    <property type="term" value="F:electron transfer activity"/>
    <property type="evidence" value="ECO:0007669"/>
    <property type="project" value="UniProtKB-UniRule"/>
</dbReference>
<dbReference type="GO" id="GO:0020037">
    <property type="term" value="F:heme binding"/>
    <property type="evidence" value="ECO:0007669"/>
    <property type="project" value="InterPro"/>
</dbReference>
<dbReference type="GO" id="GO:0005506">
    <property type="term" value="F:iron ion binding"/>
    <property type="evidence" value="ECO:0007669"/>
    <property type="project" value="InterPro"/>
</dbReference>
<dbReference type="GO" id="GO:0015979">
    <property type="term" value="P:photosynthesis"/>
    <property type="evidence" value="ECO:0007669"/>
    <property type="project" value="UniProtKB-UniRule"/>
</dbReference>
<dbReference type="FunFam" id="1.20.5.700:FF:000001">
    <property type="entry name" value="Cytochrome f"/>
    <property type="match status" value="1"/>
</dbReference>
<dbReference type="FunFam" id="2.60.40.830:FF:000001">
    <property type="entry name" value="Cytochrome f"/>
    <property type="match status" value="1"/>
</dbReference>
<dbReference type="Gene3D" id="2.40.50.100">
    <property type="match status" value="1"/>
</dbReference>
<dbReference type="Gene3D" id="2.60.40.830">
    <property type="entry name" value="Cytochrome f large domain"/>
    <property type="match status" value="1"/>
</dbReference>
<dbReference type="Gene3D" id="1.20.5.700">
    <property type="entry name" value="Single helix bin"/>
    <property type="match status" value="1"/>
</dbReference>
<dbReference type="HAMAP" id="MF_00610">
    <property type="entry name" value="Cytb6_f_cytF"/>
    <property type="match status" value="1"/>
</dbReference>
<dbReference type="InterPro" id="IPR024058">
    <property type="entry name" value="Cyt-f_TM"/>
</dbReference>
<dbReference type="InterPro" id="IPR002325">
    <property type="entry name" value="Cyt_f"/>
</dbReference>
<dbReference type="InterPro" id="IPR024094">
    <property type="entry name" value="Cyt_f_lg_dom"/>
</dbReference>
<dbReference type="InterPro" id="IPR036826">
    <property type="entry name" value="Cyt_f_lg_dom_sf"/>
</dbReference>
<dbReference type="InterPro" id="IPR011054">
    <property type="entry name" value="Rudment_hybrid_motif"/>
</dbReference>
<dbReference type="NCBIfam" id="NF002736">
    <property type="entry name" value="PRK02693.1"/>
    <property type="match status" value="1"/>
</dbReference>
<dbReference type="PANTHER" id="PTHR33288">
    <property type="match status" value="1"/>
</dbReference>
<dbReference type="PANTHER" id="PTHR33288:SF10">
    <property type="entry name" value="CYTOCHROME F"/>
    <property type="match status" value="1"/>
</dbReference>
<dbReference type="Pfam" id="PF01333">
    <property type="entry name" value="Apocytochr_F_C"/>
    <property type="match status" value="1"/>
</dbReference>
<dbReference type="Pfam" id="PF16639">
    <property type="entry name" value="Apocytochr_F_N"/>
    <property type="match status" value="1"/>
</dbReference>
<dbReference type="PRINTS" id="PR00610">
    <property type="entry name" value="CYTOCHROMEF"/>
</dbReference>
<dbReference type="SUPFAM" id="SSF103431">
    <property type="entry name" value="Cytochrome f subunit of the cytochrome b6f complex, transmembrane anchor"/>
    <property type="match status" value="1"/>
</dbReference>
<dbReference type="SUPFAM" id="SSF49441">
    <property type="entry name" value="Cytochrome f, large domain"/>
    <property type="match status" value="1"/>
</dbReference>
<dbReference type="SUPFAM" id="SSF51246">
    <property type="entry name" value="Rudiment single hybrid motif"/>
    <property type="match status" value="1"/>
</dbReference>
<dbReference type="PROSITE" id="PS51010">
    <property type="entry name" value="CYTF"/>
    <property type="match status" value="1"/>
</dbReference>
<organism>
    <name type="scientific">Desmonostoc sp. (strain PCC 7906)</name>
    <name type="common">Nostoc sp. (strain PCC 7906)</name>
    <dbReference type="NCBI Taxonomy" id="1181"/>
    <lineage>
        <taxon>Bacteria</taxon>
        <taxon>Bacillati</taxon>
        <taxon>Cyanobacteriota</taxon>
        <taxon>Cyanophyceae</taxon>
        <taxon>Nostocales</taxon>
        <taxon>Nostocaceae</taxon>
        <taxon>Desmonostoc</taxon>
    </lineage>
</organism>
<proteinExistence type="inferred from homology"/>
<sequence length="333" mass="35931">MRNASVTARLTRSVRAIVKTLLIAIATVTFYFSCDLALPQSAAAYPFWAQQTYPETPREPTGRIVCANCHLAAKPTEVEVPQSVLPDTVFKAVVKIPYDTSAQQVGADGSKVGLNVGAVLMLPEGFKIAPEDRISEELQEEIGDTYFQPYSEDKENIVIVGPLPGEQYQEIVFPVLSPNPATDKNIHFGKYSVHVGGNRGRGQVYPTGEKSNNNLYNASATGTIAKIAKEEDEDGNVKYQVNIQPESGDVVVDTVPAGPELIVSEGQAVKAGDALTNNPNVGGFGQRDAEIVLQDAGRVKGLIAFVALVMLAQVMLVLKKKQVERVQAAEMNF</sequence>
<name>CYF_DESSP</name>
<reference key="1">
    <citation type="journal article" date="1988" name="Proc. Natl. Acad. Sci. U.S.A.">
        <title>Primary structure of cotranscribed genes encoding the Rieske Fe-S and cytochrome f proteins of the cyanobacterium Nostoc PCC 7906.</title>
        <authorList>
            <person name="Kallas T."/>
            <person name="Spiller S."/>
            <person name="Malkin R."/>
        </authorList>
    </citation>
    <scope>NUCLEOTIDE SEQUENCE [GENOMIC DNA]</scope>
</reference>
<accession>P13626</accession>
<protein>
    <recommendedName>
        <fullName>Cytochrome f</fullName>
    </recommendedName>
</protein>
<gene>
    <name type="primary">petA</name>
</gene>
<keyword id="KW-0249">Electron transport</keyword>
<keyword id="KW-0349">Heme</keyword>
<keyword id="KW-0408">Iron</keyword>
<keyword id="KW-0472">Membrane</keyword>
<keyword id="KW-0479">Metal-binding</keyword>
<keyword id="KW-0602">Photosynthesis</keyword>
<keyword id="KW-0732">Signal</keyword>
<keyword id="KW-0793">Thylakoid</keyword>
<keyword id="KW-0812">Transmembrane</keyword>
<keyword id="KW-1133">Transmembrane helix</keyword>
<keyword id="KW-0813">Transport</keyword>